<feature type="signal peptide" evidence="4">
    <location>
        <begin position="1"/>
        <end position="29"/>
    </location>
</feature>
<feature type="chain" id="PRO_0000248151" description="Sperm acrosome membrane-associated protein 1">
    <location>
        <begin position="30"/>
        <end position="279"/>
    </location>
</feature>
<feature type="topological domain" description="Extracellular" evidence="4">
    <location>
        <begin position="30"/>
        <end position="221"/>
    </location>
</feature>
<feature type="transmembrane region" description="Helical" evidence="4">
    <location>
        <begin position="222"/>
        <end position="242"/>
    </location>
</feature>
<feature type="topological domain" description="Cytoplasmic" evidence="4">
    <location>
        <begin position="243"/>
        <end position="279"/>
    </location>
</feature>
<feature type="region of interest" description="Disordered" evidence="5">
    <location>
        <begin position="39"/>
        <end position="74"/>
    </location>
</feature>
<feature type="region of interest" description="Disordered" evidence="5">
    <location>
        <begin position="253"/>
        <end position="279"/>
    </location>
</feature>
<feature type="compositionally biased region" description="Acidic residues" evidence="5">
    <location>
        <begin position="46"/>
        <end position="58"/>
    </location>
</feature>
<feature type="modified residue" description="Phosphotyrosine" evidence="1">
    <location>
        <position position="253"/>
    </location>
</feature>
<feature type="modified residue" description="Phosphoserine" evidence="1">
    <location>
        <position position="262"/>
    </location>
</feature>
<feature type="modified residue" description="Phosphoserine" evidence="2">
    <location>
        <position position="275"/>
    </location>
</feature>
<feature type="glycosylation site" description="N-linked (GlcNAc...) asparagine" evidence="4">
    <location>
        <position position="31"/>
    </location>
</feature>
<dbReference type="EMBL" id="BC110228">
    <property type="protein sequence ID" value="AAI10229.1"/>
    <property type="molecule type" value="mRNA"/>
</dbReference>
<dbReference type="RefSeq" id="NP_001040010.1">
    <property type="nucleotide sequence ID" value="NM_001046545.1"/>
</dbReference>
<dbReference type="FunCoup" id="Q2YDG7">
    <property type="interactions" value="137"/>
</dbReference>
<dbReference type="STRING" id="9913.ENSBTAP00000025934"/>
<dbReference type="GlyCosmos" id="Q2YDG7">
    <property type="glycosylation" value="1 site, No reported glycans"/>
</dbReference>
<dbReference type="GlyGen" id="Q2YDG7">
    <property type="glycosylation" value="1 site"/>
</dbReference>
<dbReference type="PaxDb" id="9913-ENSBTAP00000025934"/>
<dbReference type="GeneID" id="614884"/>
<dbReference type="KEGG" id="bta:614884"/>
<dbReference type="CTD" id="81833"/>
<dbReference type="eggNOG" id="ENOG502S339">
    <property type="taxonomic scope" value="Eukaryota"/>
</dbReference>
<dbReference type="InParanoid" id="Q2YDG7"/>
<dbReference type="OrthoDB" id="9448631at2759"/>
<dbReference type="Proteomes" id="UP000009136">
    <property type="component" value="Unplaced"/>
</dbReference>
<dbReference type="GO" id="GO:0002080">
    <property type="term" value="C:acrosomal membrane"/>
    <property type="evidence" value="ECO:0000318"/>
    <property type="project" value="GO_Central"/>
</dbReference>
<dbReference type="GO" id="GO:0002079">
    <property type="term" value="C:inner acrosomal membrane"/>
    <property type="evidence" value="ECO:0007669"/>
    <property type="project" value="UniProtKB-SubCell"/>
</dbReference>
<dbReference type="GO" id="GO:0001675">
    <property type="term" value="P:acrosome assembly"/>
    <property type="evidence" value="ECO:0000318"/>
    <property type="project" value="GO_Central"/>
</dbReference>
<dbReference type="CDD" id="cd13783">
    <property type="entry name" value="SPACA1"/>
    <property type="match status" value="1"/>
</dbReference>
<dbReference type="InterPro" id="IPR037878">
    <property type="entry name" value="SPACA1"/>
</dbReference>
<dbReference type="PANTHER" id="PTHR47223">
    <property type="entry name" value="SPERM ACROSOME MEMBRANE-ASSOCIATED PROTEIN 1"/>
    <property type="match status" value="1"/>
</dbReference>
<dbReference type="PANTHER" id="PTHR47223:SF1">
    <property type="entry name" value="SPERM ACROSOME MEMBRANE-ASSOCIATED PROTEIN 1"/>
    <property type="match status" value="1"/>
</dbReference>
<keyword id="KW-0968">Cytoplasmic vesicle</keyword>
<keyword id="KW-0325">Glycoprotein</keyword>
<keyword id="KW-0472">Membrane</keyword>
<keyword id="KW-0597">Phosphoprotein</keyword>
<keyword id="KW-1185">Reference proteome</keyword>
<keyword id="KW-0732">Signal</keyword>
<keyword id="KW-0812">Transmembrane</keyword>
<keyword id="KW-1133">Transmembrane helix</keyword>
<evidence type="ECO:0000250" key="1">
    <source>
        <dbReference type="UniProtKB" id="D5K8A9"/>
    </source>
</evidence>
<evidence type="ECO:0000250" key="2">
    <source>
        <dbReference type="UniProtKB" id="Q9DA48"/>
    </source>
</evidence>
<evidence type="ECO:0000250" key="3">
    <source>
        <dbReference type="UniProtKB" id="Q9HBV2"/>
    </source>
</evidence>
<evidence type="ECO:0000255" key="4"/>
<evidence type="ECO:0000256" key="5">
    <source>
        <dbReference type="SAM" id="MobiDB-lite"/>
    </source>
</evidence>
<evidence type="ECO:0000305" key="6"/>
<sequence length="279" mass="30939">MKSRGAGCSARLLLTVGWLLLAGLQSTCGINVTAIQDPSLAREGEGEPEGDEEPENDSETEKEPQAEAEDDSEGIGIREVILTSGCPGGESKCIVRVEECRGPVDCGWGRPISESLEHVRLACVHTSPENRFKYIWRLLRPDQQAIILANDSAILEVHRDTHPKAFECETLDNNEIVASIRFTIYTTTELQMKRASRPDTDAVLVFVLTIGVIICIFVIFVLIFIIINWTAVKDFWAKASTTEIQSELSSMRYKDSTSLDQSPTDIPGHEDDALSEWNE</sequence>
<proteinExistence type="evidence at transcript level"/>
<reference key="1">
    <citation type="submission" date="2005-11" db="EMBL/GenBank/DDBJ databases">
        <authorList>
            <consortium name="NIH - Mammalian Gene Collection (MGC) project"/>
        </authorList>
    </citation>
    <scope>NUCLEOTIDE SEQUENCE [LARGE SCALE MRNA]</scope>
    <source>
        <strain>Crossbred X Angus</strain>
        <tissue>Liver</tissue>
    </source>
</reference>
<organism>
    <name type="scientific">Bos taurus</name>
    <name type="common">Bovine</name>
    <dbReference type="NCBI Taxonomy" id="9913"/>
    <lineage>
        <taxon>Eukaryota</taxon>
        <taxon>Metazoa</taxon>
        <taxon>Chordata</taxon>
        <taxon>Craniata</taxon>
        <taxon>Vertebrata</taxon>
        <taxon>Euteleostomi</taxon>
        <taxon>Mammalia</taxon>
        <taxon>Eutheria</taxon>
        <taxon>Laurasiatheria</taxon>
        <taxon>Artiodactyla</taxon>
        <taxon>Ruminantia</taxon>
        <taxon>Pecora</taxon>
        <taxon>Bovidae</taxon>
        <taxon>Bovinae</taxon>
        <taxon>Bos</taxon>
    </lineage>
</organism>
<protein>
    <recommendedName>
        <fullName>Sperm acrosome membrane-associated protein 1</fullName>
    </recommendedName>
</protein>
<gene>
    <name type="primary">SPACA1</name>
</gene>
<comment type="function">
    <text evidence="2">Plays a role in acrosome expansion and establishment of normal sperm morphology during spermatogenesis. Important for male fertility.</text>
</comment>
<comment type="subunit">
    <text evidence="2">Interacts with CYLC1; the interaction may be relevant for proper acrosome attachment to the nuclear envelope.</text>
</comment>
<comment type="subcellular location">
    <subcellularLocation>
        <location evidence="2">Cytoplasmic vesicle</location>
        <location evidence="2">Secretory vesicle</location>
        <location evidence="2">Acrosome inner membrane</location>
        <topology evidence="6">Single-pass type I membrane protein</topology>
    </subcellularLocation>
    <text evidence="1 3">Primarily found in the equatorial segment of the acrosome (By similarity). The tyrosine phosphorylated protein localizes to a smaller region within the equatorial segment (By similarity). Also expressed weakly in the principal segment (By similarity).</text>
</comment>
<comment type="PTM">
    <text evidence="2">N-glycosylated.</text>
</comment>
<accession>Q2YDG7</accession>
<name>SACA1_BOVIN</name>